<organism>
    <name type="scientific">Mycobacterium bovis (strain ATCC BAA-935 / AF2122/97)</name>
    <dbReference type="NCBI Taxonomy" id="233413"/>
    <lineage>
        <taxon>Bacteria</taxon>
        <taxon>Bacillati</taxon>
        <taxon>Actinomycetota</taxon>
        <taxon>Actinomycetes</taxon>
        <taxon>Mycobacteriales</taxon>
        <taxon>Mycobacteriaceae</taxon>
        <taxon>Mycobacterium</taxon>
        <taxon>Mycobacterium tuberculosis complex</taxon>
    </lineage>
</organism>
<sequence length="240" mass="26509">MALQPVTRRSVPEEVFEQIATDVLTGEMPPGEALPSERRLAELLGVSRPAVREALKRLSAAGLVEVRQGDVTTVRDFRRHAGLDLLPRLLFRNGELDISVVRSILEARLRNFPKVAELAAERNEPELAELLQDSLRALDTEEDPIVWQRHTLDFWDHVVDSAGSIVDRLMYNAFRAAYEPTLAALTTTMTAAAKRPSDYRKLADAICSGDPTGAKKAAQDLLELANTSLMAVLVSQASRQ</sequence>
<feature type="chain" id="PRO_0000050700" description="Uncharacterized HTH-type transcriptional regulator Mb0601">
    <location>
        <begin position="1"/>
        <end position="240"/>
    </location>
</feature>
<feature type="domain" description="HTH gntR-type" evidence="1">
    <location>
        <begin position="9"/>
        <end position="77"/>
    </location>
</feature>
<feature type="DNA-binding region" description="H-T-H motif" evidence="1">
    <location>
        <begin position="37"/>
        <end position="56"/>
    </location>
</feature>
<protein>
    <recommendedName>
        <fullName>Uncharacterized HTH-type transcriptional regulator Mb0601</fullName>
    </recommendedName>
</protein>
<dbReference type="EMBL" id="LT708304">
    <property type="protein sequence ID" value="SIT99198.1"/>
    <property type="molecule type" value="Genomic_DNA"/>
</dbReference>
<dbReference type="RefSeq" id="NP_854261.1">
    <property type="nucleotide sequence ID" value="NC_002945.3"/>
</dbReference>
<dbReference type="SMR" id="P67742"/>
<dbReference type="PATRIC" id="fig|233413.5.peg.654"/>
<dbReference type="Proteomes" id="UP000001419">
    <property type="component" value="Chromosome"/>
</dbReference>
<dbReference type="GO" id="GO:0003677">
    <property type="term" value="F:DNA binding"/>
    <property type="evidence" value="ECO:0007669"/>
    <property type="project" value="UniProtKB-KW"/>
</dbReference>
<dbReference type="GO" id="GO:0003700">
    <property type="term" value="F:DNA-binding transcription factor activity"/>
    <property type="evidence" value="ECO:0007669"/>
    <property type="project" value="InterPro"/>
</dbReference>
<dbReference type="CDD" id="cd07377">
    <property type="entry name" value="WHTH_GntR"/>
    <property type="match status" value="1"/>
</dbReference>
<dbReference type="FunFam" id="1.10.10.10:FF:000693">
    <property type="entry name" value="GntR family transcriptional regulator"/>
    <property type="match status" value="1"/>
</dbReference>
<dbReference type="Gene3D" id="1.20.120.530">
    <property type="entry name" value="GntR ligand-binding domain-like"/>
    <property type="match status" value="1"/>
</dbReference>
<dbReference type="Gene3D" id="1.10.10.10">
    <property type="entry name" value="Winged helix-like DNA-binding domain superfamily/Winged helix DNA-binding domain"/>
    <property type="match status" value="1"/>
</dbReference>
<dbReference type="InterPro" id="IPR011711">
    <property type="entry name" value="GntR_C"/>
</dbReference>
<dbReference type="InterPro" id="IPR008920">
    <property type="entry name" value="TF_FadR/GntR_C"/>
</dbReference>
<dbReference type="InterPro" id="IPR000524">
    <property type="entry name" value="Tscrpt_reg_HTH_GntR"/>
</dbReference>
<dbReference type="InterPro" id="IPR036388">
    <property type="entry name" value="WH-like_DNA-bd_sf"/>
</dbReference>
<dbReference type="InterPro" id="IPR036390">
    <property type="entry name" value="WH_DNA-bd_sf"/>
</dbReference>
<dbReference type="PANTHER" id="PTHR43537:SF24">
    <property type="entry name" value="GLUCONATE OPERON TRANSCRIPTIONAL REPRESSOR"/>
    <property type="match status" value="1"/>
</dbReference>
<dbReference type="PANTHER" id="PTHR43537">
    <property type="entry name" value="TRANSCRIPTIONAL REGULATOR, GNTR FAMILY"/>
    <property type="match status" value="1"/>
</dbReference>
<dbReference type="Pfam" id="PF07729">
    <property type="entry name" value="FCD"/>
    <property type="match status" value="1"/>
</dbReference>
<dbReference type="Pfam" id="PF00392">
    <property type="entry name" value="GntR"/>
    <property type="match status" value="1"/>
</dbReference>
<dbReference type="PRINTS" id="PR00035">
    <property type="entry name" value="HTHGNTR"/>
</dbReference>
<dbReference type="SMART" id="SM00895">
    <property type="entry name" value="FCD"/>
    <property type="match status" value="1"/>
</dbReference>
<dbReference type="SMART" id="SM00345">
    <property type="entry name" value="HTH_GNTR"/>
    <property type="match status" value="1"/>
</dbReference>
<dbReference type="SUPFAM" id="SSF48008">
    <property type="entry name" value="GntR ligand-binding domain-like"/>
    <property type="match status" value="1"/>
</dbReference>
<dbReference type="SUPFAM" id="SSF46785">
    <property type="entry name" value="Winged helix' DNA-binding domain"/>
    <property type="match status" value="1"/>
</dbReference>
<dbReference type="PROSITE" id="PS50949">
    <property type="entry name" value="HTH_GNTR"/>
    <property type="match status" value="1"/>
</dbReference>
<name>Y601_MYCBO</name>
<gene>
    <name type="ordered locus">BQ2027_MB0601</name>
</gene>
<reference key="1">
    <citation type="journal article" date="2003" name="Proc. Natl. Acad. Sci. U.S.A.">
        <title>The complete genome sequence of Mycobacterium bovis.</title>
        <authorList>
            <person name="Garnier T."/>
            <person name="Eiglmeier K."/>
            <person name="Camus J.-C."/>
            <person name="Medina N."/>
            <person name="Mansoor H."/>
            <person name="Pryor M."/>
            <person name="Duthoy S."/>
            <person name="Grondin S."/>
            <person name="Lacroix C."/>
            <person name="Monsempe C."/>
            <person name="Simon S."/>
            <person name="Harris B."/>
            <person name="Atkin R."/>
            <person name="Doggett J."/>
            <person name="Mayes R."/>
            <person name="Keating L."/>
            <person name="Wheeler P.R."/>
            <person name="Parkhill J."/>
            <person name="Barrell B.G."/>
            <person name="Cole S.T."/>
            <person name="Gordon S.V."/>
            <person name="Hewinson R.G."/>
        </authorList>
    </citation>
    <scope>NUCLEOTIDE SEQUENCE [LARGE SCALE GENOMIC DNA]</scope>
    <source>
        <strain>ATCC BAA-935 / AF2122/97</strain>
    </source>
</reference>
<reference key="2">
    <citation type="journal article" date="2017" name="Genome Announc.">
        <title>Updated reference genome sequence and annotation of Mycobacterium bovis AF2122/97.</title>
        <authorList>
            <person name="Malone K.M."/>
            <person name="Farrell D."/>
            <person name="Stuber T.P."/>
            <person name="Schubert O.T."/>
            <person name="Aebersold R."/>
            <person name="Robbe-Austerman S."/>
            <person name="Gordon S.V."/>
        </authorList>
    </citation>
    <scope>NUCLEOTIDE SEQUENCE [LARGE SCALE GENOMIC DNA]</scope>
    <scope>GENOME REANNOTATION</scope>
    <source>
        <strain>ATCC BAA-935 / AF2122/97</strain>
    </source>
</reference>
<accession>P67742</accession>
<accession>A0A1R3XVT0</accession>
<accession>O07792</accession>
<accession>X2BFB8</accession>
<keyword id="KW-0238">DNA-binding</keyword>
<keyword id="KW-1185">Reference proteome</keyword>
<keyword id="KW-0804">Transcription</keyword>
<keyword id="KW-0805">Transcription regulation</keyword>
<evidence type="ECO:0000255" key="1">
    <source>
        <dbReference type="PROSITE-ProRule" id="PRU00307"/>
    </source>
</evidence>
<proteinExistence type="predicted"/>